<comment type="function">
    <text evidence="1">Na(+)/H(+) antiporter that extrudes sodium in exchange for external protons.</text>
</comment>
<comment type="catalytic activity">
    <reaction evidence="1">
        <text>Na(+)(in) + 2 H(+)(out) = Na(+)(out) + 2 H(+)(in)</text>
        <dbReference type="Rhea" id="RHEA:29251"/>
        <dbReference type="ChEBI" id="CHEBI:15378"/>
        <dbReference type="ChEBI" id="CHEBI:29101"/>
    </reaction>
    <physiologicalReaction direction="left-to-right" evidence="1">
        <dbReference type="Rhea" id="RHEA:29252"/>
    </physiologicalReaction>
</comment>
<comment type="subcellular location">
    <subcellularLocation>
        <location evidence="1">Cell inner membrane</location>
        <topology evidence="1">Multi-pass membrane protein</topology>
    </subcellularLocation>
</comment>
<comment type="similarity">
    <text evidence="1">Belongs to the NhaA Na(+)/H(+) (TC 2.A.33) antiporter family.</text>
</comment>
<organism>
    <name type="scientific">Acidiphilium cryptum (strain JF-5)</name>
    <dbReference type="NCBI Taxonomy" id="349163"/>
    <lineage>
        <taxon>Bacteria</taxon>
        <taxon>Pseudomonadati</taxon>
        <taxon>Pseudomonadota</taxon>
        <taxon>Alphaproteobacteria</taxon>
        <taxon>Acetobacterales</taxon>
        <taxon>Acidocellaceae</taxon>
        <taxon>Acidiphilium</taxon>
    </lineage>
</organism>
<sequence>MITDQNSKPQQGELPTTHIDALTNSFSQFLRIEATSGAVLLLATVVALTLSNSPWSDGFRSLWETPIGIQIGAFQFLRSLRDLINDGLMTLFFFIVALEIKREVVLGELRNPRMVALSVVAAAGGMLVPMGLYLALQHGQPGQHGWGVVMPTDTAFVIGCLALLGSRVPPGLRVFLLSLAVVDDLAAILVVAVGYSRSIDWTALALGAVGLVIIRGMALLGVRNIRVYFLAGAIIWLAVNASGIHATIVGVILGLMTPTAGWVSDQRLGEILRKVLSYPPGDHWSGDTEDNRALQVAGIAVRETLSPVERLEAMLHPWVAFGVMPLFALANAGVPITIKGLINPVSLAVMAGFVLGKPIGVTAFAWLGVRTGVAIRPAGLTWGGLVGGALLTGIGFTMALFIAGQAFQDATLNAAKLGILAASVVSSVAGLTLLCALPRSDGTPMFRGRRGGGEHP</sequence>
<feature type="chain" id="PRO_0000334217" description="Na(+)/H(+) antiporter NhaA 3">
    <location>
        <begin position="1"/>
        <end position="456"/>
    </location>
</feature>
<feature type="transmembrane region" description="Helical" evidence="1">
    <location>
        <begin position="32"/>
        <end position="52"/>
    </location>
</feature>
<feature type="transmembrane region" description="Helical" evidence="1">
    <location>
        <begin position="87"/>
        <end position="107"/>
    </location>
</feature>
<feature type="transmembrane region" description="Helical" evidence="1">
    <location>
        <begin position="114"/>
        <end position="134"/>
    </location>
</feature>
<feature type="transmembrane region" description="Helical" evidence="1">
    <location>
        <begin position="145"/>
        <end position="165"/>
    </location>
</feature>
<feature type="transmembrane region" description="Helical" evidence="1">
    <location>
        <begin position="174"/>
        <end position="194"/>
    </location>
</feature>
<feature type="transmembrane region" description="Helical" evidence="1">
    <location>
        <begin position="202"/>
        <end position="222"/>
    </location>
</feature>
<feature type="transmembrane region" description="Helical" evidence="1">
    <location>
        <begin position="233"/>
        <end position="253"/>
    </location>
</feature>
<feature type="transmembrane region" description="Helical" evidence="1">
    <location>
        <begin position="318"/>
        <end position="338"/>
    </location>
</feature>
<feature type="transmembrane region" description="Helical" evidence="1">
    <location>
        <begin position="347"/>
        <end position="367"/>
    </location>
</feature>
<feature type="transmembrane region" description="Helical" evidence="1">
    <location>
        <begin position="382"/>
        <end position="402"/>
    </location>
</feature>
<feature type="transmembrane region" description="Helical" evidence="1">
    <location>
        <begin position="417"/>
        <end position="437"/>
    </location>
</feature>
<gene>
    <name evidence="1" type="primary">nhaA3</name>
    <name type="ordered locus">Acry_3215</name>
</gene>
<proteinExistence type="inferred from homology"/>
<geneLocation type="plasmid">
    <name>pACRY01</name>
</geneLocation>
<keyword id="KW-0050">Antiport</keyword>
<keyword id="KW-0997">Cell inner membrane</keyword>
<keyword id="KW-1003">Cell membrane</keyword>
<keyword id="KW-0406">Ion transport</keyword>
<keyword id="KW-0472">Membrane</keyword>
<keyword id="KW-0614">Plasmid</keyword>
<keyword id="KW-1185">Reference proteome</keyword>
<keyword id="KW-0915">Sodium</keyword>
<keyword id="KW-0739">Sodium transport</keyword>
<keyword id="KW-0812">Transmembrane</keyword>
<keyword id="KW-1133">Transmembrane helix</keyword>
<keyword id="KW-0813">Transport</keyword>
<dbReference type="EMBL" id="CP000689">
    <property type="protein sequence ID" value="ABQ28836.1"/>
    <property type="molecule type" value="Genomic_DNA"/>
</dbReference>
<dbReference type="RefSeq" id="WP_011930488.1">
    <property type="nucleotide sequence ID" value="NC_009467.1"/>
</dbReference>
<dbReference type="SMR" id="A5FTA4"/>
<dbReference type="KEGG" id="acr:Acry_3215"/>
<dbReference type="HOGENOM" id="CLU_015803_1_2_5"/>
<dbReference type="Proteomes" id="UP000000245">
    <property type="component" value="Plasmid pACRY01"/>
</dbReference>
<dbReference type="GO" id="GO:0005886">
    <property type="term" value="C:plasma membrane"/>
    <property type="evidence" value="ECO:0007669"/>
    <property type="project" value="UniProtKB-SubCell"/>
</dbReference>
<dbReference type="GO" id="GO:0015385">
    <property type="term" value="F:sodium:proton antiporter activity"/>
    <property type="evidence" value="ECO:0007669"/>
    <property type="project" value="TreeGrafter"/>
</dbReference>
<dbReference type="GO" id="GO:0006885">
    <property type="term" value="P:regulation of pH"/>
    <property type="evidence" value="ECO:0007669"/>
    <property type="project" value="InterPro"/>
</dbReference>
<dbReference type="Gene3D" id="1.20.1530.10">
    <property type="entry name" value="Na+/H+ antiporter like domain"/>
    <property type="match status" value="1"/>
</dbReference>
<dbReference type="HAMAP" id="MF_01844">
    <property type="entry name" value="NhaA"/>
    <property type="match status" value="1"/>
</dbReference>
<dbReference type="InterPro" id="IPR023171">
    <property type="entry name" value="Na/H_antiporter_dom_sf"/>
</dbReference>
<dbReference type="InterPro" id="IPR004670">
    <property type="entry name" value="NhaA"/>
</dbReference>
<dbReference type="NCBIfam" id="TIGR00773">
    <property type="entry name" value="NhaA"/>
    <property type="match status" value="1"/>
</dbReference>
<dbReference type="PANTHER" id="PTHR30341:SF0">
    <property type="entry name" value="NA(+)_H(+) ANTIPORTER NHAA"/>
    <property type="match status" value="1"/>
</dbReference>
<dbReference type="PANTHER" id="PTHR30341">
    <property type="entry name" value="SODIUM ION/PROTON ANTIPORTER NHAA-RELATED"/>
    <property type="match status" value="1"/>
</dbReference>
<dbReference type="Pfam" id="PF06965">
    <property type="entry name" value="Na_H_antiport_1"/>
    <property type="match status" value="1"/>
</dbReference>
<reference key="1">
    <citation type="submission" date="2007-05" db="EMBL/GenBank/DDBJ databases">
        <title>Complete sequence of plasmid1 pACRY01 of Acidiphilium cryptum JF-5.</title>
        <authorList>
            <consortium name="US DOE Joint Genome Institute"/>
            <person name="Copeland A."/>
            <person name="Lucas S."/>
            <person name="Lapidus A."/>
            <person name="Barry K."/>
            <person name="Detter J.C."/>
            <person name="Glavina del Rio T."/>
            <person name="Hammon N."/>
            <person name="Israni S."/>
            <person name="Dalin E."/>
            <person name="Tice H."/>
            <person name="Pitluck S."/>
            <person name="Sims D."/>
            <person name="Brettin T."/>
            <person name="Bruce D."/>
            <person name="Han C."/>
            <person name="Schmutz J."/>
            <person name="Larimer F."/>
            <person name="Land M."/>
            <person name="Hauser L."/>
            <person name="Kyrpides N."/>
            <person name="Kim E."/>
            <person name="Magnuson T."/>
            <person name="Richardson P."/>
        </authorList>
    </citation>
    <scope>NUCLEOTIDE SEQUENCE [LARGE SCALE GENOMIC DNA]</scope>
    <source>
        <strain>JF-5</strain>
    </source>
</reference>
<accession>A5FTA4</accession>
<name>NHAA3_ACICJ</name>
<protein>
    <recommendedName>
        <fullName evidence="1">Na(+)/H(+) antiporter NhaA 3</fullName>
    </recommendedName>
    <alternativeName>
        <fullName evidence="1">Sodium/proton antiporter NhaA 3</fullName>
    </alternativeName>
</protein>
<evidence type="ECO:0000255" key="1">
    <source>
        <dbReference type="HAMAP-Rule" id="MF_01844"/>
    </source>
</evidence>